<sequence>MASSSSNSWRYDVFPSFRGEDVRNNFLSHLLKEFESKGIVTFRDDHIKRSHTIGHELRAAIRESKISVVLFSENYASSSWCLDELIEIMKCKEEQGLKVMPVFYKVDPSDIRKQTGKFGMSFLETCCGKTEERQHNWRRALTDAANILGDHPQNWDNEAYKITTISKDVLEKLNATPSRDFNDLVGMEAHIAKMESLLCLESQGVRIVGIWGPAGVGKTTIARALYNQYHENFNLSIFMENVRESYGEAGLDDYGLKLHLQQRFLSKLLDQKDLRVRHLGAIEERLKSQKVLIILDDVDNIEQLKALAKENQWFGNKSRIVVTTQNKQLLVSHDINHMYQVAYPSKQEALTIFCQHAFKQSSPSDDLKHLAIEFTTLAGHLPLALRVLGSFMRGKGKEEWEFSLPTLKSRLDGEVEKVLKVGYDGLHDHEKDLFLHIACIFSGQHENYLKQMIIANNDTYVSFGLQVLADKSLIQKFENGRIEMHSLLRQLGKEVVRKQSIYEPGKRQFLMNAKETCGVLSNNTGTGTVLGISLDMCEIKEELYISEKTFEEMRNLVYLKFYMSSPIDDKMKVKLQLPEEGLSYLPQLRLLHWDAYPLEFFPSSFRPECLVELNMSHSKLKKLWSGVQPLRNLRTMNLNSSRNLEILPNLMEATKLNRLDLGWCESLVELPSSIKNLQHLILLEMSCCKKLEIIPTNINLPSLEVLHFRYCTRLQTFPEISTNIRLLNLIGTAITEVPPSVKYWSKIDEICMERAKVKRLVHVPYVLEKLCLRENKELETIPRYLKYLPRLQMIDISYCINIISLPKLPGSVSALTAVNCESLQILHGHFRNKSIHLNFINCLKLGQRAQEKIHRSVYIHQSSYIADVLPGEHVPAYFSYRSTGSSIMIHSNKVDLSKFNRFKVCLVLGAGKRFEGCDIKFYKQFFCKPREYYVPKHLDSPLLKSDHLCMCEFELMPPHPPTEWELLHPNEFLEVSFESRGGLYKCEVKECGLQFLEPHETSEFRYLSPHLYLGGSWIGNSSSSIEEIIHVDQEESSSDSEEIIYADQEESSSGIEEIIHAEREGTNRRKSVMRWIKVGARKMGLSLECLKPWTR</sequence>
<dbReference type="EC" id="3.2.2.6" evidence="1"/>
<dbReference type="EMBL" id="AF080120">
    <property type="protein sequence ID" value="AAC35544.1"/>
    <property type="molecule type" value="Genomic_DNA"/>
</dbReference>
<dbReference type="EMBL" id="AL049876">
    <property type="protein sequence ID" value="CAB43052.1"/>
    <property type="status" value="ALT_SEQ"/>
    <property type="molecule type" value="Genomic_DNA"/>
</dbReference>
<dbReference type="EMBL" id="AL161531">
    <property type="protein sequence ID" value="CAB81218.1"/>
    <property type="status" value="ALT_SEQ"/>
    <property type="molecule type" value="Genomic_DNA"/>
</dbReference>
<dbReference type="EMBL" id="CP002687">
    <property type="protein sequence ID" value="AEE82980.1"/>
    <property type="molecule type" value="Genomic_DNA"/>
</dbReference>
<dbReference type="PIR" id="T01916">
    <property type="entry name" value="T01916"/>
</dbReference>
<dbReference type="PIR" id="T08196">
    <property type="entry name" value="T08196"/>
</dbReference>
<dbReference type="RefSeq" id="NP_192855.1">
    <property type="nucleotide sequence ID" value="NM_117187.2"/>
</dbReference>
<dbReference type="SMR" id="O82500"/>
<dbReference type="STRING" id="3702.O82500"/>
<dbReference type="PaxDb" id="3702-AT4G11170.1"/>
<dbReference type="EnsemblPlants" id="AT4G11170.1">
    <property type="protein sequence ID" value="AT4G11170.1"/>
    <property type="gene ID" value="AT4G11170"/>
</dbReference>
<dbReference type="GeneID" id="826718"/>
<dbReference type="Gramene" id="AT4G11170.1">
    <property type="protein sequence ID" value="AT4G11170.1"/>
    <property type="gene ID" value="AT4G11170"/>
</dbReference>
<dbReference type="KEGG" id="ath:AT4G11170"/>
<dbReference type="Araport" id="AT4G11170"/>
<dbReference type="TAIR" id="AT4G11170">
    <property type="gene designation" value="RMG1"/>
</dbReference>
<dbReference type="eggNOG" id="ENOG502SUNR">
    <property type="taxonomic scope" value="Eukaryota"/>
</dbReference>
<dbReference type="HOGENOM" id="CLU_001561_0_1_1"/>
<dbReference type="InParanoid" id="O82500"/>
<dbReference type="OMA" id="MFECVLP"/>
<dbReference type="PhylomeDB" id="O82500"/>
<dbReference type="PRO" id="PR:O82500"/>
<dbReference type="Proteomes" id="UP000006548">
    <property type="component" value="Chromosome 4"/>
</dbReference>
<dbReference type="ExpressionAtlas" id="O82500">
    <property type="expression patterns" value="baseline and differential"/>
</dbReference>
<dbReference type="GO" id="GO:0005739">
    <property type="term" value="C:mitochondrion"/>
    <property type="evidence" value="ECO:0007005"/>
    <property type="project" value="TAIR"/>
</dbReference>
<dbReference type="GO" id="GO:0043531">
    <property type="term" value="F:ADP binding"/>
    <property type="evidence" value="ECO:0007669"/>
    <property type="project" value="InterPro"/>
</dbReference>
<dbReference type="GO" id="GO:0016887">
    <property type="term" value="F:ATP hydrolysis activity"/>
    <property type="evidence" value="ECO:0007669"/>
    <property type="project" value="InterPro"/>
</dbReference>
<dbReference type="GO" id="GO:0061809">
    <property type="term" value="F:NAD+ nucleosidase activity, cyclic ADP-ribose generating"/>
    <property type="evidence" value="ECO:0007669"/>
    <property type="project" value="UniProtKB-EC"/>
</dbReference>
<dbReference type="GO" id="GO:0006952">
    <property type="term" value="P:defense response"/>
    <property type="evidence" value="ECO:0007669"/>
    <property type="project" value="UniProtKB-KW"/>
</dbReference>
<dbReference type="GO" id="GO:0010193">
    <property type="term" value="P:response to ozone"/>
    <property type="evidence" value="ECO:0000270"/>
    <property type="project" value="TAIR"/>
</dbReference>
<dbReference type="GO" id="GO:0007165">
    <property type="term" value="P:signal transduction"/>
    <property type="evidence" value="ECO:0007669"/>
    <property type="project" value="InterPro"/>
</dbReference>
<dbReference type="FunFam" id="1.10.8.430:FF:000002">
    <property type="entry name" value="Disease resistance protein (TIR-NBS-LRR class)"/>
    <property type="match status" value="1"/>
</dbReference>
<dbReference type="FunFam" id="3.40.50.10140:FF:000007">
    <property type="entry name" value="Disease resistance protein (TIR-NBS-LRR class)"/>
    <property type="match status" value="1"/>
</dbReference>
<dbReference type="FunFam" id="3.40.50.300:FF:001002">
    <property type="entry name" value="Disease resistance protein (TIR-NBS-LRR class)"/>
    <property type="match status" value="1"/>
</dbReference>
<dbReference type="FunFam" id="3.80.10.10:FF:000386">
    <property type="entry name" value="Disease resistance protein RPS4"/>
    <property type="match status" value="1"/>
</dbReference>
<dbReference type="Gene3D" id="1.10.8.430">
    <property type="entry name" value="Helical domain of apoptotic protease-activating factors"/>
    <property type="match status" value="1"/>
</dbReference>
<dbReference type="Gene3D" id="3.40.50.300">
    <property type="entry name" value="P-loop containing nucleotide triphosphate hydrolases"/>
    <property type="match status" value="1"/>
</dbReference>
<dbReference type="Gene3D" id="3.80.10.10">
    <property type="entry name" value="Ribonuclease Inhibitor"/>
    <property type="match status" value="2"/>
</dbReference>
<dbReference type="Gene3D" id="3.40.50.10140">
    <property type="entry name" value="Toll/interleukin-1 receptor homology (TIR) domain"/>
    <property type="match status" value="1"/>
</dbReference>
<dbReference type="InterPro" id="IPR003593">
    <property type="entry name" value="AAA+_ATPase"/>
</dbReference>
<dbReference type="InterPro" id="IPR042197">
    <property type="entry name" value="Apaf_helical"/>
</dbReference>
<dbReference type="InterPro" id="IPR045344">
    <property type="entry name" value="C-JID"/>
</dbReference>
<dbReference type="InterPro" id="IPR044974">
    <property type="entry name" value="Disease_R_plants"/>
</dbReference>
<dbReference type="InterPro" id="IPR011713">
    <property type="entry name" value="Leu-rich_rpt_3"/>
</dbReference>
<dbReference type="InterPro" id="IPR032675">
    <property type="entry name" value="LRR_dom_sf"/>
</dbReference>
<dbReference type="InterPro" id="IPR002182">
    <property type="entry name" value="NB-ARC"/>
</dbReference>
<dbReference type="InterPro" id="IPR027417">
    <property type="entry name" value="P-loop_NTPase"/>
</dbReference>
<dbReference type="InterPro" id="IPR000157">
    <property type="entry name" value="TIR_dom"/>
</dbReference>
<dbReference type="InterPro" id="IPR035897">
    <property type="entry name" value="Toll_tir_struct_dom_sf"/>
</dbReference>
<dbReference type="InterPro" id="IPR036390">
    <property type="entry name" value="WH_DNA-bd_sf"/>
</dbReference>
<dbReference type="PANTHER" id="PTHR11017:SF241">
    <property type="entry name" value="AAA+ ATPASE DOMAIN-CONTAINING PROTEIN"/>
    <property type="match status" value="1"/>
</dbReference>
<dbReference type="PANTHER" id="PTHR11017">
    <property type="entry name" value="LEUCINE-RICH REPEAT-CONTAINING PROTEIN"/>
    <property type="match status" value="1"/>
</dbReference>
<dbReference type="Pfam" id="PF20160">
    <property type="entry name" value="C-JID"/>
    <property type="match status" value="1"/>
</dbReference>
<dbReference type="Pfam" id="PF07725">
    <property type="entry name" value="LRR_3"/>
    <property type="match status" value="1"/>
</dbReference>
<dbReference type="Pfam" id="PF00931">
    <property type="entry name" value="NB-ARC"/>
    <property type="match status" value="1"/>
</dbReference>
<dbReference type="Pfam" id="PF01582">
    <property type="entry name" value="TIR"/>
    <property type="match status" value="1"/>
</dbReference>
<dbReference type="Pfam" id="PF23282">
    <property type="entry name" value="WHD_ROQ1"/>
    <property type="match status" value="1"/>
</dbReference>
<dbReference type="PRINTS" id="PR00364">
    <property type="entry name" value="DISEASERSIST"/>
</dbReference>
<dbReference type="SMART" id="SM00382">
    <property type="entry name" value="AAA"/>
    <property type="match status" value="1"/>
</dbReference>
<dbReference type="SMART" id="SM00255">
    <property type="entry name" value="TIR"/>
    <property type="match status" value="1"/>
</dbReference>
<dbReference type="SUPFAM" id="SSF52058">
    <property type="entry name" value="L domain-like"/>
    <property type="match status" value="1"/>
</dbReference>
<dbReference type="SUPFAM" id="SSF52540">
    <property type="entry name" value="P-loop containing nucleoside triphosphate hydrolases"/>
    <property type="match status" value="1"/>
</dbReference>
<dbReference type="SUPFAM" id="SSF52200">
    <property type="entry name" value="Toll/Interleukin receptor TIR domain"/>
    <property type="match status" value="1"/>
</dbReference>
<dbReference type="SUPFAM" id="SSF46785">
    <property type="entry name" value="Winged helix' DNA-binding domain"/>
    <property type="match status" value="1"/>
</dbReference>
<dbReference type="PROSITE" id="PS50104">
    <property type="entry name" value="TIR"/>
    <property type="match status" value="1"/>
</dbReference>
<gene>
    <name type="ordered locus">At4g11170</name>
    <name type="ORF">F2P3.8</name>
    <name type="ORF">T22B4.150</name>
</gene>
<organism>
    <name type="scientific">Arabidopsis thaliana</name>
    <name type="common">Mouse-ear cress</name>
    <dbReference type="NCBI Taxonomy" id="3702"/>
    <lineage>
        <taxon>Eukaryota</taxon>
        <taxon>Viridiplantae</taxon>
        <taxon>Streptophyta</taxon>
        <taxon>Embryophyta</taxon>
        <taxon>Tracheophyta</taxon>
        <taxon>Spermatophyta</taxon>
        <taxon>Magnoliopsida</taxon>
        <taxon>eudicotyledons</taxon>
        <taxon>Gunneridae</taxon>
        <taxon>Pentapetalae</taxon>
        <taxon>rosids</taxon>
        <taxon>malvids</taxon>
        <taxon>Brassicales</taxon>
        <taxon>Brassicaceae</taxon>
        <taxon>Camelineae</taxon>
        <taxon>Arabidopsis</taxon>
    </lineage>
</organism>
<evidence type="ECO:0000255" key="1">
    <source>
        <dbReference type="PROSITE-ProRule" id="PRU00204"/>
    </source>
</evidence>
<evidence type="ECO:0000305" key="2"/>
<name>Y4117_ARATH</name>
<comment type="catalytic activity">
    <reaction evidence="1">
        <text>NAD(+) + H2O = ADP-D-ribose + nicotinamide + H(+)</text>
        <dbReference type="Rhea" id="RHEA:16301"/>
        <dbReference type="ChEBI" id="CHEBI:15377"/>
        <dbReference type="ChEBI" id="CHEBI:15378"/>
        <dbReference type="ChEBI" id="CHEBI:17154"/>
        <dbReference type="ChEBI" id="CHEBI:57540"/>
        <dbReference type="ChEBI" id="CHEBI:57967"/>
        <dbReference type="EC" id="3.2.2.6"/>
    </reaction>
    <physiologicalReaction direction="left-to-right" evidence="1">
        <dbReference type="Rhea" id="RHEA:16302"/>
    </physiologicalReaction>
</comment>
<comment type="domain">
    <text evidence="1">The TIR domain mediates NAD(+) hydrolase (NADase) activity. Self-association of TIR domains is required for NADase activity.</text>
</comment>
<comment type="sequence caution" evidence="2">
    <conflict type="erroneous gene model prediction">
        <sequence resource="EMBL-CDS" id="CAB43052"/>
    </conflict>
    <text>The predicted gene At4g11170 has been split into 2 genes: At4g11170 and At4g11175.</text>
</comment>
<comment type="sequence caution" evidence="2">
    <conflict type="erroneous gene model prediction">
        <sequence resource="EMBL-CDS" id="CAB81218"/>
    </conflict>
    <text>The predicted gene At4g11170 has been split into 2 genes: At4g11170 and At4g11175.</text>
</comment>
<protein>
    <recommendedName>
        <fullName>Putative disease resistance protein At4g11170</fullName>
        <ecNumber evidence="1">3.2.2.6</ecNumber>
    </recommendedName>
</protein>
<accession>O82500</accession>
<accession>Q9T016</accession>
<feature type="chain" id="PRO_0000262928" description="Putative disease resistance protein At4g11170">
    <location>
        <begin position="1"/>
        <end position="1095"/>
    </location>
</feature>
<feature type="domain" description="TIR" evidence="1">
    <location>
        <begin position="9"/>
        <end position="173"/>
    </location>
</feature>
<feature type="domain" description="NB-ARC">
    <location>
        <begin position="168"/>
        <end position="454"/>
    </location>
</feature>
<feature type="repeat" description="LRR 1">
    <location>
        <begin position="609"/>
        <end position="631"/>
    </location>
</feature>
<feature type="repeat" description="LRR 2">
    <location>
        <begin position="632"/>
        <end position="654"/>
    </location>
</feature>
<feature type="repeat" description="LRR 3">
    <location>
        <begin position="655"/>
        <end position="677"/>
    </location>
</feature>
<feature type="repeat" description="LRR 4">
    <location>
        <begin position="679"/>
        <end position="701"/>
    </location>
</feature>
<feature type="repeat" description="LRR 5">
    <location>
        <begin position="702"/>
        <end position="722"/>
    </location>
</feature>
<feature type="repeat" description="LRR 6">
    <location>
        <begin position="723"/>
        <end position="744"/>
    </location>
</feature>
<feature type="active site" evidence="1">
    <location>
        <position position="84"/>
    </location>
</feature>
<proteinExistence type="evidence at transcript level"/>
<reference key="1">
    <citation type="journal article" date="1999" name="Nature">
        <title>Sequence and analysis of chromosome 4 of the plant Arabidopsis thaliana.</title>
        <authorList>
            <person name="Mayer K.F.X."/>
            <person name="Schueller C."/>
            <person name="Wambutt R."/>
            <person name="Murphy G."/>
            <person name="Volckaert G."/>
            <person name="Pohl T."/>
            <person name="Duesterhoeft A."/>
            <person name="Stiekema W."/>
            <person name="Entian K.-D."/>
            <person name="Terryn N."/>
            <person name="Harris B."/>
            <person name="Ansorge W."/>
            <person name="Brandt P."/>
            <person name="Grivell L.A."/>
            <person name="Rieger M."/>
            <person name="Weichselgartner M."/>
            <person name="de Simone V."/>
            <person name="Obermaier B."/>
            <person name="Mache R."/>
            <person name="Mueller M."/>
            <person name="Kreis M."/>
            <person name="Delseny M."/>
            <person name="Puigdomenech P."/>
            <person name="Watson M."/>
            <person name="Schmidtheini T."/>
            <person name="Reichert B."/>
            <person name="Portetelle D."/>
            <person name="Perez-Alonso M."/>
            <person name="Boutry M."/>
            <person name="Bancroft I."/>
            <person name="Vos P."/>
            <person name="Hoheisel J."/>
            <person name="Zimmermann W."/>
            <person name="Wedler H."/>
            <person name="Ridley P."/>
            <person name="Langham S.-A."/>
            <person name="McCullagh B."/>
            <person name="Bilham L."/>
            <person name="Robben J."/>
            <person name="van der Schueren J."/>
            <person name="Grymonprez B."/>
            <person name="Chuang Y.-J."/>
            <person name="Vandenbussche F."/>
            <person name="Braeken M."/>
            <person name="Weltjens I."/>
            <person name="Voet M."/>
            <person name="Bastiaens I."/>
            <person name="Aert R."/>
            <person name="Defoor E."/>
            <person name="Weitzenegger T."/>
            <person name="Bothe G."/>
            <person name="Ramsperger U."/>
            <person name="Hilbert H."/>
            <person name="Braun M."/>
            <person name="Holzer E."/>
            <person name="Brandt A."/>
            <person name="Peters S."/>
            <person name="van Staveren M."/>
            <person name="Dirkse W."/>
            <person name="Mooijman P."/>
            <person name="Klein Lankhorst R."/>
            <person name="Rose M."/>
            <person name="Hauf J."/>
            <person name="Koetter P."/>
            <person name="Berneiser S."/>
            <person name="Hempel S."/>
            <person name="Feldpausch M."/>
            <person name="Lamberth S."/>
            <person name="Van den Daele H."/>
            <person name="De Keyser A."/>
            <person name="Buysshaert C."/>
            <person name="Gielen J."/>
            <person name="Villarroel R."/>
            <person name="De Clercq R."/>
            <person name="van Montagu M."/>
            <person name="Rogers J."/>
            <person name="Cronin A."/>
            <person name="Quail M.A."/>
            <person name="Bray-Allen S."/>
            <person name="Clark L."/>
            <person name="Doggett J."/>
            <person name="Hall S."/>
            <person name="Kay M."/>
            <person name="Lennard N."/>
            <person name="McLay K."/>
            <person name="Mayes R."/>
            <person name="Pettett A."/>
            <person name="Rajandream M.A."/>
            <person name="Lyne M."/>
            <person name="Benes V."/>
            <person name="Rechmann S."/>
            <person name="Borkova D."/>
            <person name="Bloecker H."/>
            <person name="Scharfe M."/>
            <person name="Grimm M."/>
            <person name="Loehnert T.-H."/>
            <person name="Dose S."/>
            <person name="de Haan M."/>
            <person name="Maarse A.C."/>
            <person name="Schaefer M."/>
            <person name="Mueller-Auer S."/>
            <person name="Gabel C."/>
            <person name="Fuchs M."/>
            <person name="Fartmann B."/>
            <person name="Granderath K."/>
            <person name="Dauner D."/>
            <person name="Herzl A."/>
            <person name="Neumann S."/>
            <person name="Argiriou A."/>
            <person name="Vitale D."/>
            <person name="Liguori R."/>
            <person name="Piravandi E."/>
            <person name="Massenet O."/>
            <person name="Quigley F."/>
            <person name="Clabauld G."/>
            <person name="Muendlein A."/>
            <person name="Felber R."/>
            <person name="Schnabl S."/>
            <person name="Hiller R."/>
            <person name="Schmidt W."/>
            <person name="Lecharny A."/>
            <person name="Aubourg S."/>
            <person name="Chefdor F."/>
            <person name="Cooke R."/>
            <person name="Berger C."/>
            <person name="Monfort A."/>
            <person name="Casacuberta E."/>
            <person name="Gibbons T."/>
            <person name="Weber N."/>
            <person name="Vandenbol M."/>
            <person name="Bargues M."/>
            <person name="Terol J."/>
            <person name="Torres A."/>
            <person name="Perez-Perez A."/>
            <person name="Purnelle B."/>
            <person name="Bent E."/>
            <person name="Johnson S."/>
            <person name="Tacon D."/>
            <person name="Jesse T."/>
            <person name="Heijnen L."/>
            <person name="Schwarz S."/>
            <person name="Scholler P."/>
            <person name="Heber S."/>
            <person name="Francs P."/>
            <person name="Bielke C."/>
            <person name="Frishman D."/>
            <person name="Haase D."/>
            <person name="Lemcke K."/>
            <person name="Mewes H.-W."/>
            <person name="Stocker S."/>
            <person name="Zaccaria P."/>
            <person name="Bevan M."/>
            <person name="Wilson R.K."/>
            <person name="de la Bastide M."/>
            <person name="Habermann K."/>
            <person name="Parnell L."/>
            <person name="Dedhia N."/>
            <person name="Gnoj L."/>
            <person name="Schutz K."/>
            <person name="Huang E."/>
            <person name="Spiegel L."/>
            <person name="Sekhon M."/>
            <person name="Murray J."/>
            <person name="Sheet P."/>
            <person name="Cordes M."/>
            <person name="Abu-Threideh J."/>
            <person name="Stoneking T."/>
            <person name="Kalicki J."/>
            <person name="Graves T."/>
            <person name="Harmon G."/>
            <person name="Edwards J."/>
            <person name="Latreille P."/>
            <person name="Courtney L."/>
            <person name="Cloud J."/>
            <person name="Abbott A."/>
            <person name="Scott K."/>
            <person name="Johnson D."/>
            <person name="Minx P."/>
            <person name="Bentley D."/>
            <person name="Fulton B."/>
            <person name="Miller N."/>
            <person name="Greco T."/>
            <person name="Kemp K."/>
            <person name="Kramer J."/>
            <person name="Fulton L."/>
            <person name="Mardis E."/>
            <person name="Dante M."/>
            <person name="Pepin K."/>
            <person name="Hillier L.W."/>
            <person name="Nelson J."/>
            <person name="Spieth J."/>
            <person name="Ryan E."/>
            <person name="Andrews S."/>
            <person name="Geisel C."/>
            <person name="Layman D."/>
            <person name="Du H."/>
            <person name="Ali J."/>
            <person name="Berghoff A."/>
            <person name="Jones K."/>
            <person name="Drone K."/>
            <person name="Cotton M."/>
            <person name="Joshu C."/>
            <person name="Antonoiu B."/>
            <person name="Zidanic M."/>
            <person name="Strong C."/>
            <person name="Sun H."/>
            <person name="Lamar B."/>
            <person name="Yordan C."/>
            <person name="Ma P."/>
            <person name="Zhong J."/>
            <person name="Preston R."/>
            <person name="Vil D."/>
            <person name="Shekher M."/>
            <person name="Matero A."/>
            <person name="Shah R."/>
            <person name="Swaby I.K."/>
            <person name="O'Shaughnessy A."/>
            <person name="Rodriguez M."/>
            <person name="Hoffman J."/>
            <person name="Till S."/>
            <person name="Granat S."/>
            <person name="Shohdy N."/>
            <person name="Hasegawa A."/>
            <person name="Hameed A."/>
            <person name="Lodhi M."/>
            <person name="Johnson A."/>
            <person name="Chen E."/>
            <person name="Marra M.A."/>
            <person name="Martienssen R."/>
            <person name="McCombie W.R."/>
        </authorList>
    </citation>
    <scope>NUCLEOTIDE SEQUENCE [LARGE SCALE GENOMIC DNA]</scope>
    <source>
        <strain>cv. Columbia</strain>
    </source>
</reference>
<reference key="2">
    <citation type="journal article" date="2017" name="Plant J.">
        <title>Araport11: a complete reannotation of the Arabidopsis thaliana reference genome.</title>
        <authorList>
            <person name="Cheng C.Y."/>
            <person name="Krishnakumar V."/>
            <person name="Chan A.P."/>
            <person name="Thibaud-Nissen F."/>
            <person name="Schobel S."/>
            <person name="Town C.D."/>
        </authorList>
    </citation>
    <scope>GENOME REANNOTATION</scope>
    <source>
        <strain>cv. Columbia</strain>
    </source>
</reference>
<keyword id="KW-0378">Hydrolase</keyword>
<keyword id="KW-0433">Leucine-rich repeat</keyword>
<keyword id="KW-0520">NAD</keyword>
<keyword id="KW-0611">Plant defense</keyword>
<keyword id="KW-1185">Reference proteome</keyword>
<keyword id="KW-0677">Repeat</keyword>